<dbReference type="EC" id="1.14.99.56" evidence="6"/>
<dbReference type="EMBL" id="CP003012">
    <property type="protein sequence ID" value="AEO69043.1"/>
    <property type="molecule type" value="Genomic_DNA"/>
</dbReference>
<dbReference type="RefSeq" id="XP_003655379.1">
    <property type="nucleotide sequence ID" value="XM_003655331.1"/>
</dbReference>
<dbReference type="SMR" id="G2RB72"/>
<dbReference type="GeneID" id="11524533"/>
<dbReference type="KEGG" id="ttt:THITE_43665"/>
<dbReference type="eggNOG" id="ENOG502SING">
    <property type="taxonomic scope" value="Eukaryota"/>
</dbReference>
<dbReference type="HOGENOM" id="CLU_031730_4_1_1"/>
<dbReference type="OrthoDB" id="6038816at2759"/>
<dbReference type="Proteomes" id="UP000008181">
    <property type="component" value="Chromosome 4"/>
</dbReference>
<dbReference type="GO" id="GO:0005576">
    <property type="term" value="C:extracellular region"/>
    <property type="evidence" value="ECO:0007669"/>
    <property type="project" value="UniProtKB-SubCell"/>
</dbReference>
<dbReference type="GO" id="GO:0046872">
    <property type="term" value="F:metal ion binding"/>
    <property type="evidence" value="ECO:0007669"/>
    <property type="project" value="UniProtKB-KW"/>
</dbReference>
<dbReference type="GO" id="GO:0004497">
    <property type="term" value="F:monooxygenase activity"/>
    <property type="evidence" value="ECO:0007669"/>
    <property type="project" value="UniProtKB-KW"/>
</dbReference>
<dbReference type="GO" id="GO:0030245">
    <property type="term" value="P:cellulose catabolic process"/>
    <property type="evidence" value="ECO:0007669"/>
    <property type="project" value="UniProtKB-KW"/>
</dbReference>
<dbReference type="Gene3D" id="2.70.50.70">
    <property type="match status" value="1"/>
</dbReference>
<dbReference type="InterPro" id="IPR049892">
    <property type="entry name" value="AA9"/>
</dbReference>
<dbReference type="InterPro" id="IPR005103">
    <property type="entry name" value="AA9_LPMO"/>
</dbReference>
<dbReference type="PANTHER" id="PTHR33353:SF10">
    <property type="entry name" value="ENDO-BETA-1,4-GLUCANASE D"/>
    <property type="match status" value="1"/>
</dbReference>
<dbReference type="PANTHER" id="PTHR33353">
    <property type="entry name" value="PUTATIVE (AFU_ORTHOLOGUE AFUA_1G12560)-RELATED"/>
    <property type="match status" value="1"/>
</dbReference>
<dbReference type="Pfam" id="PF03443">
    <property type="entry name" value="AA9"/>
    <property type="match status" value="1"/>
</dbReference>
<keyword id="KW-0119">Carbohydrate metabolism</keyword>
<keyword id="KW-0136">Cellulose degradation</keyword>
<keyword id="KW-0186">Copper</keyword>
<keyword id="KW-1015">Disulfide bond</keyword>
<keyword id="KW-0325">Glycoprotein</keyword>
<keyword id="KW-0479">Metal-binding</keyword>
<keyword id="KW-0503">Monooxygenase</keyword>
<keyword id="KW-0560">Oxidoreductase</keyword>
<keyword id="KW-0624">Polysaccharide degradation</keyword>
<keyword id="KW-1185">Reference proteome</keyword>
<keyword id="KW-0964">Secreted</keyword>
<keyword id="KW-0732">Signal</keyword>
<gene>
    <name evidence="7" type="primary">LPMO9U</name>
    <name type="ORF">THITE_43665</name>
</gene>
<comment type="function">
    <text evidence="6">Lytic polysaccharide monooxygenase (LPMO) that depolymerizes crystalline and amorphous polysaccharides via the oxidation of scissile alpha- or beta-(1-4)-glycosidic bonds, yielding C1 and C4 oxidation products (PubMed:35080911). Catalysis by LPMOs requires the reduction of the active-site copper from Cu(II) to Cu(I) by a reducing agent and H(2)O(2) or O(2) as a cosubstrate (PubMed:35080911). Shows no activity on wheat arabinoxylan, konjac glucomannan, acetylated spruce galactoglucomannan, or cellopentaose (PubMed:35080911).</text>
</comment>
<comment type="catalytic activity">
    <reaction evidence="6">
        <text>[(1-&gt;4)-beta-D-glucosyl]n+m + reduced acceptor + O2 = 4-dehydro-beta-D-glucosyl-[(1-&gt;4)-beta-D-glucosyl]n-1 + [(1-&gt;4)-beta-D-glucosyl]m + acceptor + H2O.</text>
        <dbReference type="EC" id="1.14.99.56"/>
    </reaction>
</comment>
<comment type="cofactor">
    <cofactor evidence="9">
        <name>Cu(2+)</name>
        <dbReference type="ChEBI" id="CHEBI:29036"/>
    </cofactor>
    <text evidence="9">Binds 1 copper ion per subunit.</text>
</comment>
<comment type="subcellular location">
    <subcellularLocation>
        <location evidence="9">Secreted</location>
    </subcellularLocation>
</comment>
<comment type="biotechnology">
    <text evidence="9">Lignocellulose is the most abundant polymeric composite on Earth and is a recalcitrant but promising renewable substrate for industrial biotechnology applications. Together with cellobiose dehydrogenases (CDHs) an enzymatic system capable of oxidative cellulose cleavage is formed, which increases the efficiency of cellulases and put LPMOs at focus of biofuel research.</text>
</comment>
<comment type="similarity">
    <text evidence="8">Belongs to the polysaccharide monooxygenase AA9 family.</text>
</comment>
<sequence>MKLYLAAFLGAVATPGAFAHQIHGILLVNGTETPEWKYVRDVAWEGAYEPEKYPNTEFFKTPPQTDINNPNITCGRNAFDSASKTETADILAGSEVGFRVSWDGNGKYGVFWHPGPGQIYLSRAPNDDLEDYRGDGDWFKIATGAAVSNTEWLLWNKHDFNFTIPKTTPPGKYLMRIEQFMPSTVEYSQWYVNCAHVNIIGPGGGTPTGFARFPGTYTVDDPGIKVPLNQIVNSGELPQDQLRLLEYKPPGPALWTG</sequence>
<accession>G2RB72</accession>
<feature type="signal peptide" evidence="4">
    <location>
        <begin position="1"/>
        <end position="19"/>
    </location>
</feature>
<feature type="chain" id="PRO_5003436435" description="AA9 family lytic polysaccharide monooxygenase U" evidence="4">
    <location>
        <begin position="20"/>
        <end position="257"/>
    </location>
</feature>
<feature type="binding site" evidence="2">
    <location>
        <position position="20"/>
    </location>
    <ligand>
        <name>Cu(2+)</name>
        <dbReference type="ChEBI" id="CHEBI:29036"/>
    </ligand>
</feature>
<feature type="binding site" evidence="2">
    <location>
        <position position="113"/>
    </location>
    <ligand>
        <name>Cu(2+)</name>
        <dbReference type="ChEBI" id="CHEBI:29036"/>
    </ligand>
</feature>
<feature type="binding site" evidence="1">
    <location>
        <position position="189"/>
    </location>
    <ligand>
        <name>O2</name>
        <dbReference type="ChEBI" id="CHEBI:15379"/>
    </ligand>
</feature>
<feature type="binding site" evidence="2">
    <location>
        <position position="191"/>
    </location>
    <ligand>
        <name>Cu(2+)</name>
        <dbReference type="ChEBI" id="CHEBI:29036"/>
    </ligand>
</feature>
<feature type="glycosylation site" description="N-linked (GlcNAc...) asparagine" evidence="5">
    <location>
        <position position="29"/>
    </location>
</feature>
<feature type="glycosylation site" description="N-linked (GlcNAc...) asparagine" evidence="5">
    <location>
        <position position="71"/>
    </location>
</feature>
<feature type="glycosylation site" description="N-linked (GlcNAc...) asparagine" evidence="5">
    <location>
        <position position="161"/>
    </location>
</feature>
<feature type="disulfide bond" evidence="3">
    <location>
        <begin position="74"/>
        <end position="194"/>
    </location>
</feature>
<protein>
    <recommendedName>
        <fullName evidence="7">AA9 family lytic polysaccharide monooxygenase U</fullName>
        <shortName evidence="7">LPMO9U</shortName>
        <ecNumber evidence="6">1.14.99.56</ecNumber>
    </recommendedName>
    <alternativeName>
        <fullName evidence="8">Endo-1,4-beta-glucanase LPMO9U</fullName>
        <shortName evidence="8">Endoglucanase LPMO9U</shortName>
    </alternativeName>
    <alternativeName>
        <fullName evidence="8">Glycosyl hydrolase 61 family protein LPMO9U</fullName>
    </alternativeName>
</protein>
<name>LP9U_THETT</name>
<proteinExistence type="evidence at protein level"/>
<reference key="1">
    <citation type="journal article" date="2011" name="Nat. Biotechnol.">
        <title>Comparative genomic analysis of the thermophilic biomass-degrading fungi Myceliophthora thermophila and Thielavia terrestris.</title>
        <authorList>
            <person name="Berka R.M."/>
            <person name="Grigoriev I.V."/>
            <person name="Otillar R."/>
            <person name="Salamov A."/>
            <person name="Grimwood J."/>
            <person name="Reid I."/>
            <person name="Ishmael N."/>
            <person name="John T."/>
            <person name="Darmond C."/>
            <person name="Moisan M.-C."/>
            <person name="Henrissat B."/>
            <person name="Coutinho P.M."/>
            <person name="Lombard V."/>
            <person name="Natvig D.O."/>
            <person name="Lindquist E."/>
            <person name="Schmutz J."/>
            <person name="Lucas S."/>
            <person name="Harris P."/>
            <person name="Powlowski J."/>
            <person name="Bellemare A."/>
            <person name="Taylor D."/>
            <person name="Butler G."/>
            <person name="de Vries R.P."/>
            <person name="Allijn I.E."/>
            <person name="van den Brink J."/>
            <person name="Ushinsky S."/>
            <person name="Storms R."/>
            <person name="Powell A.J."/>
            <person name="Paulsen I.T."/>
            <person name="Elbourne L.D.H."/>
            <person name="Baker S.E."/>
            <person name="Magnuson J."/>
            <person name="LaBoissiere S."/>
            <person name="Clutterbuck A.J."/>
            <person name="Martinez D."/>
            <person name="Wogulis M."/>
            <person name="de Leon A.L."/>
            <person name="Rey M.W."/>
            <person name="Tsang A."/>
        </authorList>
    </citation>
    <scope>NUCLEOTIDE SEQUENCE [LARGE SCALE GENOMIC DNA]</scope>
    <source>
        <strain>ATCC 38088 / NRRL 8126</strain>
    </source>
</reference>
<reference key="2">
    <citation type="journal article" date="2022" name="Appl. Environ. Microbiol.">
        <title>Comparison of six lytic polysaccharide monooxygenases from Thermothielavioides terrestris shows that functional variation underlies the multiplicity of LPMO genes in filamentous fungi.</title>
        <authorList>
            <person name="Tolgo M."/>
            <person name="Hegnar O.A."/>
            <person name="Oestby H."/>
            <person name="Varnai A."/>
            <person name="Vilaplana F."/>
            <person name="Eijsink V.G.H."/>
            <person name="Olsson L."/>
        </authorList>
    </citation>
    <scope>FUNCTION</scope>
    <scope>CATALYTIC ACTIVITY</scope>
</reference>
<organism>
    <name type="scientific">Thermothielavioides terrestris (strain ATCC 38088 / NRRL 8126)</name>
    <name type="common">Thielavia terrestris</name>
    <dbReference type="NCBI Taxonomy" id="578455"/>
    <lineage>
        <taxon>Eukaryota</taxon>
        <taxon>Fungi</taxon>
        <taxon>Dikarya</taxon>
        <taxon>Ascomycota</taxon>
        <taxon>Pezizomycotina</taxon>
        <taxon>Sordariomycetes</taxon>
        <taxon>Sordariomycetidae</taxon>
        <taxon>Sordariales</taxon>
        <taxon>Chaetomiaceae</taxon>
        <taxon>Thermothielavioides</taxon>
        <taxon>Thermothielavioides terrestris</taxon>
    </lineage>
</organism>
<evidence type="ECO:0000250" key="1">
    <source>
        <dbReference type="UniProtKB" id="Q1K8B6"/>
    </source>
</evidence>
<evidence type="ECO:0000250" key="2">
    <source>
        <dbReference type="UniProtKB" id="Q4WP32"/>
    </source>
</evidence>
<evidence type="ECO:0000250" key="3">
    <source>
        <dbReference type="UniProtKB" id="Q7Z9M7"/>
    </source>
</evidence>
<evidence type="ECO:0000255" key="4"/>
<evidence type="ECO:0000255" key="5">
    <source>
        <dbReference type="PROSITE-ProRule" id="PRU00498"/>
    </source>
</evidence>
<evidence type="ECO:0000269" key="6">
    <source>
    </source>
</evidence>
<evidence type="ECO:0000303" key="7">
    <source>
    </source>
</evidence>
<evidence type="ECO:0000305" key="8"/>
<evidence type="ECO:0000305" key="9">
    <source>
    </source>
</evidence>